<sequence>MKDTLFNQSLNKRFCFDEKVAHVFDDMLERSIPYYYEMLDLGAYFIAQNLKENLNAKPLIYDLGCSTGNFFIALNRQIQQEIELVGIDNSMPMLKKAQEKLKDFNNVRFECMDFLEVEFKEASAFSLLFVLQFVRPMQREVLLKKIYNSLALNGVLLVGEKIMSEDRILDKQMIELYYLYKQNQGYSHNEIAFKREALENVLVPYSLKENIALLESVGFKHVEAVFKWVNFTLLVARKT</sequence>
<dbReference type="EC" id="2.1.3.-" evidence="1"/>
<dbReference type="EMBL" id="CP000241">
    <property type="protein sequence ID" value="ABF85071.1"/>
    <property type="molecule type" value="Genomic_DNA"/>
</dbReference>
<dbReference type="RefSeq" id="WP_000655630.1">
    <property type="nucleotide sequence ID" value="NC_008086.1"/>
</dbReference>
<dbReference type="SMR" id="Q1CSK1"/>
<dbReference type="KEGG" id="hpa:HPAG1_1004"/>
<dbReference type="HOGENOM" id="CLU_078475_0_0_7"/>
<dbReference type="GO" id="GO:0016743">
    <property type="term" value="F:carboxyl- or carbamoyltransferase activity"/>
    <property type="evidence" value="ECO:0007669"/>
    <property type="project" value="UniProtKB-UniRule"/>
</dbReference>
<dbReference type="GO" id="GO:1904047">
    <property type="term" value="F:S-adenosyl-L-methionine binding"/>
    <property type="evidence" value="ECO:0007669"/>
    <property type="project" value="UniProtKB-UniRule"/>
</dbReference>
<dbReference type="GO" id="GO:0002098">
    <property type="term" value="P:tRNA wobble uridine modification"/>
    <property type="evidence" value="ECO:0007669"/>
    <property type="project" value="InterPro"/>
</dbReference>
<dbReference type="CDD" id="cd02440">
    <property type="entry name" value="AdoMet_MTases"/>
    <property type="match status" value="1"/>
</dbReference>
<dbReference type="FunFam" id="3.40.50.150:FF:000474">
    <property type="entry name" value="Carboxy-S-adenosyl-L-methionine synthase"/>
    <property type="match status" value="1"/>
</dbReference>
<dbReference type="Gene3D" id="3.40.50.150">
    <property type="entry name" value="Vaccinia Virus protein VP39"/>
    <property type="match status" value="1"/>
</dbReference>
<dbReference type="HAMAP" id="MF_01589">
    <property type="entry name" value="Cx_SAM_synthase"/>
    <property type="match status" value="1"/>
</dbReference>
<dbReference type="InterPro" id="IPR005271">
    <property type="entry name" value="CmoA"/>
</dbReference>
<dbReference type="InterPro" id="IPR041698">
    <property type="entry name" value="Methyltransf_25"/>
</dbReference>
<dbReference type="InterPro" id="IPR029063">
    <property type="entry name" value="SAM-dependent_MTases_sf"/>
</dbReference>
<dbReference type="NCBIfam" id="TIGR00740">
    <property type="entry name" value="carboxy-S-adenosyl-L-methionine synthase CmoA"/>
    <property type="match status" value="1"/>
</dbReference>
<dbReference type="PANTHER" id="PTHR43861:SF2">
    <property type="entry name" value="CARBOXY-S-ADENOSYL-L-METHIONINE SYNTHASE"/>
    <property type="match status" value="1"/>
</dbReference>
<dbReference type="PANTHER" id="PTHR43861">
    <property type="entry name" value="TRANS-ACONITATE 2-METHYLTRANSFERASE-RELATED"/>
    <property type="match status" value="1"/>
</dbReference>
<dbReference type="Pfam" id="PF13649">
    <property type="entry name" value="Methyltransf_25"/>
    <property type="match status" value="1"/>
</dbReference>
<dbReference type="PIRSF" id="PIRSF006325">
    <property type="entry name" value="MeTrfase_bac"/>
    <property type="match status" value="1"/>
</dbReference>
<dbReference type="SUPFAM" id="SSF53335">
    <property type="entry name" value="S-adenosyl-L-methionine-dependent methyltransferases"/>
    <property type="match status" value="1"/>
</dbReference>
<reference key="1">
    <citation type="journal article" date="2006" name="Proc. Natl. Acad. Sci. U.S.A.">
        <title>The complete genome sequence of a chronic atrophic gastritis Helicobacter pylori strain: evolution during disease progression.</title>
        <authorList>
            <person name="Oh J.D."/>
            <person name="Kling-Baeckhed H."/>
            <person name="Giannakis M."/>
            <person name="Xu J."/>
            <person name="Fulton R.S."/>
            <person name="Fulton L.A."/>
            <person name="Cordum H.S."/>
            <person name="Wang C."/>
            <person name="Elliott G."/>
            <person name="Edwards J."/>
            <person name="Mardis E.R."/>
            <person name="Engstrand L.G."/>
            <person name="Gordon J.I."/>
        </authorList>
    </citation>
    <scope>NUCLEOTIDE SEQUENCE [LARGE SCALE GENOMIC DNA]</scope>
    <source>
        <strain>HPAG1</strain>
    </source>
</reference>
<evidence type="ECO:0000255" key="1">
    <source>
        <dbReference type="HAMAP-Rule" id="MF_01589"/>
    </source>
</evidence>
<organism>
    <name type="scientific">Helicobacter pylori (strain HPAG1)</name>
    <dbReference type="NCBI Taxonomy" id="357544"/>
    <lineage>
        <taxon>Bacteria</taxon>
        <taxon>Pseudomonadati</taxon>
        <taxon>Campylobacterota</taxon>
        <taxon>Epsilonproteobacteria</taxon>
        <taxon>Campylobacterales</taxon>
        <taxon>Helicobacteraceae</taxon>
        <taxon>Helicobacter</taxon>
    </lineage>
</organism>
<name>CMOA_HELPH</name>
<proteinExistence type="inferred from homology"/>
<accession>Q1CSK1</accession>
<keyword id="KW-0949">S-adenosyl-L-methionine</keyword>
<keyword id="KW-0808">Transferase</keyword>
<protein>
    <recommendedName>
        <fullName evidence="1">Carboxy-S-adenosyl-L-methionine synthase</fullName>
        <shortName evidence="1">Cx-SAM synthase</shortName>
        <ecNumber evidence="1">2.1.3.-</ecNumber>
    </recommendedName>
</protein>
<gene>
    <name evidence="1" type="primary">cmoA</name>
    <name type="ordered locus">HPAG1_1004</name>
</gene>
<feature type="chain" id="PRO_0000314341" description="Carboxy-S-adenosyl-L-methionine synthase">
    <location>
        <begin position="1"/>
        <end position="239"/>
    </location>
</feature>
<feature type="binding site" evidence="1">
    <location>
        <position position="35"/>
    </location>
    <ligand>
        <name>S-adenosyl-L-methionine</name>
        <dbReference type="ChEBI" id="CHEBI:59789"/>
    </ligand>
</feature>
<feature type="binding site" evidence="1">
    <location>
        <begin position="64"/>
        <end position="66"/>
    </location>
    <ligand>
        <name>S-adenosyl-L-methionine</name>
        <dbReference type="ChEBI" id="CHEBI:59789"/>
    </ligand>
</feature>
<feature type="binding site" evidence="1">
    <location>
        <begin position="88"/>
        <end position="89"/>
    </location>
    <ligand>
        <name>S-adenosyl-L-methionine</name>
        <dbReference type="ChEBI" id="CHEBI:59789"/>
    </ligand>
</feature>
<feature type="binding site" evidence="1">
    <location>
        <position position="195"/>
    </location>
    <ligand>
        <name>S-adenosyl-L-methionine</name>
        <dbReference type="ChEBI" id="CHEBI:59789"/>
    </ligand>
</feature>
<comment type="function">
    <text evidence="1">Catalyzes the conversion of S-adenosyl-L-methionine (SAM) to carboxy-S-adenosyl-L-methionine (Cx-SAM).</text>
</comment>
<comment type="catalytic activity">
    <reaction evidence="1">
        <text>prephenate + S-adenosyl-L-methionine = carboxy-S-adenosyl-L-methionine + 3-phenylpyruvate + H2O</text>
        <dbReference type="Rhea" id="RHEA:51692"/>
        <dbReference type="ChEBI" id="CHEBI:15377"/>
        <dbReference type="ChEBI" id="CHEBI:18005"/>
        <dbReference type="ChEBI" id="CHEBI:29934"/>
        <dbReference type="ChEBI" id="CHEBI:59789"/>
        <dbReference type="ChEBI" id="CHEBI:134278"/>
    </reaction>
</comment>
<comment type="subunit">
    <text evidence="1">Homodimer.</text>
</comment>
<comment type="similarity">
    <text evidence="1">Belongs to the class I-like SAM-binding methyltransferase superfamily. Cx-SAM synthase family.</text>
</comment>